<dbReference type="EC" id="1.1.1.53" evidence="5"/>
<dbReference type="EMBL" id="AL123456">
    <property type="protein sequence ID" value="CCP44774.1"/>
    <property type="molecule type" value="Genomic_DNA"/>
</dbReference>
<dbReference type="PIR" id="H70758">
    <property type="entry name" value="H70758"/>
</dbReference>
<dbReference type="RefSeq" id="NP_216518.1">
    <property type="nucleotide sequence ID" value="NC_000962.3"/>
</dbReference>
<dbReference type="RefSeq" id="WP_003410047.1">
    <property type="nucleotide sequence ID" value="NZ_NVQJ01000043.1"/>
</dbReference>
<dbReference type="PDB" id="1NFF">
    <property type="method" value="X-ray"/>
    <property type="resolution" value="1.80 A"/>
    <property type="chains" value="A/B=1-260"/>
</dbReference>
<dbReference type="PDB" id="1NFQ">
    <property type="method" value="X-ray"/>
    <property type="resolution" value="2.40 A"/>
    <property type="chains" value="A/B/C/D=1-260"/>
</dbReference>
<dbReference type="PDB" id="1NFR">
    <property type="method" value="X-ray"/>
    <property type="resolution" value="2.10 A"/>
    <property type="chains" value="A/B/C/D=1-260"/>
</dbReference>
<dbReference type="PDBsum" id="1NFF"/>
<dbReference type="PDBsum" id="1NFQ"/>
<dbReference type="PDBsum" id="1NFR"/>
<dbReference type="SMR" id="P9WGT1"/>
<dbReference type="FunCoup" id="P9WGT1">
    <property type="interactions" value="43"/>
</dbReference>
<dbReference type="STRING" id="83332.Rv2002"/>
<dbReference type="DrugBank" id="DB02854">
    <property type="generic name" value="Aetiocholanolone"/>
</dbReference>
<dbReference type="SwissLipids" id="SLP:000001178"/>
<dbReference type="PaxDb" id="83332-Rv2002"/>
<dbReference type="DNASU" id="888857"/>
<dbReference type="GeneID" id="888857"/>
<dbReference type="KEGG" id="mtu:Rv2002"/>
<dbReference type="KEGG" id="mtv:RVBD_2002"/>
<dbReference type="TubercuList" id="Rv2002"/>
<dbReference type="eggNOG" id="COG1028">
    <property type="taxonomic scope" value="Bacteria"/>
</dbReference>
<dbReference type="InParanoid" id="P9WGT1"/>
<dbReference type="OrthoDB" id="3542748at2"/>
<dbReference type="PhylomeDB" id="P9WGT1"/>
<dbReference type="BRENDA" id="1.1.1.53">
    <property type="organism ID" value="3445"/>
</dbReference>
<dbReference type="UniPathway" id="UPA00722"/>
<dbReference type="EvolutionaryTrace" id="P9WGT1"/>
<dbReference type="Proteomes" id="UP000001584">
    <property type="component" value="Chromosome"/>
</dbReference>
<dbReference type="GO" id="GO:0005886">
    <property type="term" value="C:plasma membrane"/>
    <property type="evidence" value="ECO:0007005"/>
    <property type="project" value="MTBBASE"/>
</dbReference>
<dbReference type="GO" id="GO:0047044">
    <property type="term" value="F:androstan-3-alpha,17-beta-diol dehydrogenase (NAD+) activity"/>
    <property type="evidence" value="ECO:0000314"/>
    <property type="project" value="MTBBASE"/>
</dbReference>
<dbReference type="GO" id="GO:0047023">
    <property type="term" value="F:androsterone dehydrogenase [NAD(P)+] activity"/>
    <property type="evidence" value="ECO:0007669"/>
    <property type="project" value="RHEA"/>
</dbReference>
<dbReference type="GO" id="GO:0016616">
    <property type="term" value="F:oxidoreductase activity, acting on the CH-OH group of donors, NAD or NADP as acceptor"/>
    <property type="evidence" value="ECO:0000318"/>
    <property type="project" value="GO_Central"/>
</dbReference>
<dbReference type="GO" id="GO:0006706">
    <property type="term" value="P:steroid catabolic process"/>
    <property type="evidence" value="ECO:0007669"/>
    <property type="project" value="UniProtKB-UniPathway"/>
</dbReference>
<dbReference type="GO" id="GO:0008202">
    <property type="term" value="P:steroid metabolic process"/>
    <property type="evidence" value="ECO:0000314"/>
    <property type="project" value="MTBBASE"/>
</dbReference>
<dbReference type="CDD" id="cd05341">
    <property type="entry name" value="3beta-17beta-HSD_like_SDR_c"/>
    <property type="match status" value="1"/>
</dbReference>
<dbReference type="FunFam" id="3.40.50.720:FF:000084">
    <property type="entry name" value="Short-chain dehydrogenase reductase"/>
    <property type="match status" value="1"/>
</dbReference>
<dbReference type="Gene3D" id="3.40.50.720">
    <property type="entry name" value="NAD(P)-binding Rossmann-like Domain"/>
    <property type="match status" value="1"/>
</dbReference>
<dbReference type="InterPro" id="IPR036291">
    <property type="entry name" value="NAD(P)-bd_dom_sf"/>
</dbReference>
<dbReference type="InterPro" id="IPR020904">
    <property type="entry name" value="Sc_DH/Rdtase_CS"/>
</dbReference>
<dbReference type="InterPro" id="IPR002347">
    <property type="entry name" value="SDR_fam"/>
</dbReference>
<dbReference type="NCBIfam" id="NF005559">
    <property type="entry name" value="PRK07231.1"/>
    <property type="match status" value="1"/>
</dbReference>
<dbReference type="PANTHER" id="PTHR43180">
    <property type="entry name" value="3-OXOACYL-(ACYL-CARRIER-PROTEIN) REDUCTASE (AFU_ORTHOLOGUE AFUA_6G11210)"/>
    <property type="match status" value="1"/>
</dbReference>
<dbReference type="PANTHER" id="PTHR43180:SF28">
    <property type="entry name" value="NAD(P)-BINDING ROSSMANN-FOLD SUPERFAMILY PROTEIN"/>
    <property type="match status" value="1"/>
</dbReference>
<dbReference type="Pfam" id="PF13561">
    <property type="entry name" value="adh_short_C2"/>
    <property type="match status" value="1"/>
</dbReference>
<dbReference type="PRINTS" id="PR00081">
    <property type="entry name" value="GDHRDH"/>
</dbReference>
<dbReference type="PRINTS" id="PR00080">
    <property type="entry name" value="SDRFAMILY"/>
</dbReference>
<dbReference type="SUPFAM" id="SSF51735">
    <property type="entry name" value="NAD(P)-binding Rossmann-fold domains"/>
    <property type="match status" value="1"/>
</dbReference>
<dbReference type="PROSITE" id="PS00061">
    <property type="entry name" value="ADH_SHORT"/>
    <property type="match status" value="1"/>
</dbReference>
<sequence length="260" mass="27030">MSGRLIGKVALVSGGARGMGASHVRAMVAEGAKVVFGDILDEEGKAVAAELADAARYVHLDVTQPAQWTAAVDTAVTAFGGLHVLVNNAGILNIGTIEDYALTEWQRILDVNLTGVFLGIRAVVKPMKEAGRGSIINISSIEGLAGTVACHGYTATKFAVRGLTKSTALELGPSGIRVNSIHPGLVKTPMTDWVPEDIFQTALGRAAEPVEVSNLVVYLASDESSYSTGAEFVVDGGTVAGLAHNDFGAVEVSSQPEWVT</sequence>
<evidence type="ECO:0000269" key="1">
    <source>
    </source>
</evidence>
<evidence type="ECO:0000269" key="2">
    <source>
    </source>
</evidence>
<evidence type="ECO:0000303" key="3">
    <source>
    </source>
</evidence>
<evidence type="ECO:0000305" key="4"/>
<evidence type="ECO:0000305" key="5">
    <source>
    </source>
</evidence>
<evidence type="ECO:0007744" key="6">
    <source>
        <dbReference type="PDB" id="1NFF"/>
    </source>
</evidence>
<evidence type="ECO:0007744" key="7">
    <source>
        <dbReference type="PDB" id="1NFQ"/>
    </source>
</evidence>
<evidence type="ECO:0007744" key="8">
    <source>
        <dbReference type="PDB" id="1NFR"/>
    </source>
</evidence>
<evidence type="ECO:0007829" key="9">
    <source>
        <dbReference type="PDB" id="1NFF"/>
    </source>
</evidence>
<organism>
    <name type="scientific">Mycobacterium tuberculosis (strain ATCC 25618 / H37Rv)</name>
    <dbReference type="NCBI Taxonomy" id="83332"/>
    <lineage>
        <taxon>Bacteria</taxon>
        <taxon>Bacillati</taxon>
        <taxon>Actinomycetota</taxon>
        <taxon>Actinomycetes</taxon>
        <taxon>Mycobacteriales</taxon>
        <taxon>Mycobacteriaceae</taxon>
        <taxon>Mycobacterium</taxon>
        <taxon>Mycobacterium tuberculosis complex</taxon>
    </lineage>
</organism>
<proteinExistence type="evidence at protein level"/>
<protein>
    <recommendedName>
        <fullName evidence="4">3-alpha-(or 20-beta)-hydroxysteroid dehydrogenase</fullName>
        <ecNumber evidence="5">1.1.1.53</ecNumber>
    </recommendedName>
    <alternativeName>
        <fullName evidence="3">NADH-dependent 3alpha, 20beta-hydroxysteroid dehydrogenase</fullName>
    </alternativeName>
</protein>
<gene>
    <name type="primary">fabG3</name>
    <name type="ordered locus">Rv2002</name>
    <name type="ORF">MTCY39.16c</name>
</gene>
<comment type="function">
    <text evidence="2">Probably involved in steroid metabolism. Catalyzes the oxidation of androsterone (3alpha-hydroxy-5alpha-androstan-17-one) and 20beta-hydroxyprogesterone (4-pregnen-20beta-ol-3-one), and the reduction of progesterone (4-pregnen-3,20-dione). Shows a preference for NADH. Has no detectable activity for oxidation of L-3-hydroxybutyric acid and only an insignificant activity for reduction of acetoacetyl-CoA.</text>
</comment>
<comment type="catalytic activity">
    <reaction evidence="5">
        <text>androstan-3alpha,17beta-diol + NAD(+) = 17beta-hydroxyandrostanone + NADH + H(+)</text>
        <dbReference type="Rhea" id="RHEA:22400"/>
        <dbReference type="ChEBI" id="CHEBI:15378"/>
        <dbReference type="ChEBI" id="CHEBI:18011"/>
        <dbReference type="ChEBI" id="CHEBI:57540"/>
        <dbReference type="ChEBI" id="CHEBI:57945"/>
        <dbReference type="ChEBI" id="CHEBI:85278"/>
        <dbReference type="EC" id="1.1.1.53"/>
    </reaction>
</comment>
<comment type="catalytic activity">
    <reaction evidence="2">
        <text>androsterone + NAD(+) = 5alpha-androstan-3,17-dione + NADH + H(+)</text>
        <dbReference type="Rhea" id="RHEA:20381"/>
        <dbReference type="ChEBI" id="CHEBI:15378"/>
        <dbReference type="ChEBI" id="CHEBI:15994"/>
        <dbReference type="ChEBI" id="CHEBI:16032"/>
        <dbReference type="ChEBI" id="CHEBI:57540"/>
        <dbReference type="ChEBI" id="CHEBI:57945"/>
    </reaction>
    <physiologicalReaction direction="left-to-right" evidence="2">
        <dbReference type="Rhea" id="RHEA:20382"/>
    </physiologicalReaction>
</comment>
<comment type="catalytic activity">
    <reaction evidence="2">
        <text>(20R)-20-hydroxypregn-4-en-3-one + NAD(+) = progesterone + NADH + H(+)</text>
        <dbReference type="Rhea" id="RHEA:46016"/>
        <dbReference type="ChEBI" id="CHEBI:15378"/>
        <dbReference type="ChEBI" id="CHEBI:17026"/>
        <dbReference type="ChEBI" id="CHEBI:36729"/>
        <dbReference type="ChEBI" id="CHEBI:57540"/>
        <dbReference type="ChEBI" id="CHEBI:57945"/>
    </reaction>
    <physiologicalReaction direction="left-to-right" evidence="2">
        <dbReference type="Rhea" id="RHEA:46017"/>
    </physiologicalReaction>
    <physiologicalReaction direction="right-to-left" evidence="2">
        <dbReference type="Rhea" id="RHEA:46018"/>
    </physiologicalReaction>
</comment>
<comment type="biophysicochemical properties">
    <kinetics>
        <KM evidence="2">24 uM for androsterone</KM>
        <KM evidence="2">17 uM for 20beta-hydroxyprogesterone</KM>
        <KM evidence="2">3.3 uM for progesterone</KM>
        <text evidence="2">kcat is 7.6 min(-1) with androsterone as substrate. kcat is 4.3 min(-1) with 20beta-hydroxyprogesterone as substrate. kcat is 1.2 min(-1) with progesterone as substrate.</text>
    </kinetics>
    <phDependence>
        <text evidence="2">Optimum pH is 6.0 for reductase activity.</text>
    </phDependence>
</comment>
<comment type="pathway">
    <text evidence="5">Lipid metabolism; steroid degradation.</text>
</comment>
<comment type="subunit">
    <text evidence="1 2">Homotetramer (PubMed:12524453). Homodimer (PubMed:11807257).</text>
</comment>
<comment type="similarity">
    <text evidence="4">Belongs to the short-chain dehydrogenases/reductases (SDR) family.</text>
</comment>
<reference key="1">
    <citation type="journal article" date="1998" name="Nature">
        <title>Deciphering the biology of Mycobacterium tuberculosis from the complete genome sequence.</title>
        <authorList>
            <person name="Cole S.T."/>
            <person name="Brosch R."/>
            <person name="Parkhill J."/>
            <person name="Garnier T."/>
            <person name="Churcher C.M."/>
            <person name="Harris D.E."/>
            <person name="Gordon S.V."/>
            <person name="Eiglmeier K."/>
            <person name="Gas S."/>
            <person name="Barry C.E. III"/>
            <person name="Tekaia F."/>
            <person name="Badcock K."/>
            <person name="Basham D."/>
            <person name="Brown D."/>
            <person name="Chillingworth T."/>
            <person name="Connor R."/>
            <person name="Davies R.M."/>
            <person name="Devlin K."/>
            <person name="Feltwell T."/>
            <person name="Gentles S."/>
            <person name="Hamlin N."/>
            <person name="Holroyd S."/>
            <person name="Hornsby T."/>
            <person name="Jagels K."/>
            <person name="Krogh A."/>
            <person name="McLean J."/>
            <person name="Moule S."/>
            <person name="Murphy L.D."/>
            <person name="Oliver S."/>
            <person name="Osborne J."/>
            <person name="Quail M.A."/>
            <person name="Rajandream M.A."/>
            <person name="Rogers J."/>
            <person name="Rutter S."/>
            <person name="Seeger K."/>
            <person name="Skelton S."/>
            <person name="Squares S."/>
            <person name="Squares R."/>
            <person name="Sulston J.E."/>
            <person name="Taylor K."/>
            <person name="Whitehead S."/>
            <person name="Barrell B.G."/>
        </authorList>
    </citation>
    <scope>NUCLEOTIDE SEQUENCE [LARGE SCALE GENOMIC DNA]</scope>
    <source>
        <strain>ATCC 25618 / H37Rv</strain>
    </source>
</reference>
<reference key="2">
    <citation type="journal article" date="2002" name="Acta Crystallogr. D">
        <title>Crystallization and preliminary X-ray crystallographic analysis of the Rv2002 gene product from Mycobacterium tuberculosis, a beta-ketoacyl carrier protein reductase homologue.</title>
        <authorList>
            <person name="Yang J.K."/>
            <person name="Yoon H.J."/>
            <person name="Ahn H.J."/>
            <person name="Lee B.I."/>
            <person name="Cho S.H."/>
            <person name="Waldo G.S."/>
            <person name="Park M.S."/>
            <person name="Suh S.W."/>
        </authorList>
    </citation>
    <scope>SUBUNIT</scope>
    <scope>CRYSTALLIZATION OF MUTANT THR-6/MET-47/LYS-69</scope>
    <source>
        <strain>H37Rv</strain>
    </source>
</reference>
<reference key="3">
    <citation type="journal article" date="2011" name="Mol. Cell. Proteomics">
        <title>Proteogenomic analysis of Mycobacterium tuberculosis by high resolution mass spectrometry.</title>
        <authorList>
            <person name="Kelkar D.S."/>
            <person name="Kumar D."/>
            <person name="Kumar P."/>
            <person name="Balakrishnan L."/>
            <person name="Muthusamy B."/>
            <person name="Yadav A.K."/>
            <person name="Shrivastava P."/>
            <person name="Marimuthu A."/>
            <person name="Anand S."/>
            <person name="Sundaram H."/>
            <person name="Kingsbury R."/>
            <person name="Harsha H.C."/>
            <person name="Nair B."/>
            <person name="Prasad T.S."/>
            <person name="Chauhan D.S."/>
            <person name="Katoch K."/>
            <person name="Katoch V.M."/>
            <person name="Kumar P."/>
            <person name="Chaerkady R."/>
            <person name="Ramachandran S."/>
            <person name="Dash D."/>
            <person name="Pandey A."/>
        </authorList>
    </citation>
    <scope>IDENTIFICATION BY MASS SPECTROMETRY [LARGE SCALE ANALYSIS]</scope>
    <source>
        <strain>ATCC 25618 / H37Rv</strain>
    </source>
</reference>
<reference evidence="6 7 8" key="4">
    <citation type="journal article" date="2003" name="Proc. Natl. Acad. Sci. U.S.A.">
        <title>Directed evolution approach to a structural genomics project: Rv2002 from Mycobacterium tuberculosis.</title>
        <authorList>
            <person name="Yang J.K."/>
            <person name="Park M.S."/>
            <person name="Waldo G.S."/>
            <person name="Suh S.W."/>
        </authorList>
    </citation>
    <scope>X-RAY CRYSTALLOGRAPHY (1.80 ANGSTROMS) OF MUTANT THR-6/MET-47/LYS-69 IN COMPLEXES WITH NAD; NADH AND ANDROSTERONE</scope>
    <scope>FUNCTION</scope>
    <scope>CATALYTIC ACTIVITY</scope>
    <scope>BIOPHYSICOCHEMICAL PROPERTIES</scope>
    <scope>PATHWAY</scope>
    <scope>SUBUNIT</scope>
    <scope>ACTIVE SITE</scope>
    <scope>MUTAGENESIS OF ILE-6; VAL-47; THR-69; SER-140 AND TYR-153</scope>
    <source>
        <strain>ATCC 25618 / H37Rv</strain>
    </source>
</reference>
<keyword id="KW-0002">3D-structure</keyword>
<keyword id="KW-0443">Lipid metabolism</keyword>
<keyword id="KW-0520">NAD</keyword>
<keyword id="KW-0560">Oxidoreductase</keyword>
<keyword id="KW-1185">Reference proteome</keyword>
<keyword id="KW-0753">Steroid metabolism</keyword>
<feature type="chain" id="PRO_0000054712" description="3-alpha-(or 20-beta)-hydroxysteroid dehydrogenase">
    <location>
        <begin position="1"/>
        <end position="260"/>
    </location>
</feature>
<feature type="active site" description="Proton acceptor" evidence="5">
    <location>
        <position position="153"/>
    </location>
</feature>
<feature type="binding site" evidence="2 6 7 8">
    <location>
        <position position="17"/>
    </location>
    <ligand>
        <name>NAD(+)</name>
        <dbReference type="ChEBI" id="CHEBI:57540"/>
    </ligand>
</feature>
<feature type="binding site" evidence="2 6 7 8">
    <location>
        <position position="19"/>
    </location>
    <ligand>
        <name>NAD(+)</name>
        <dbReference type="ChEBI" id="CHEBI:57540"/>
    </ligand>
</feature>
<feature type="binding site" evidence="2 6 7 8">
    <location>
        <position position="38"/>
    </location>
    <ligand>
        <name>NAD(+)</name>
        <dbReference type="ChEBI" id="CHEBI:57540"/>
    </ligand>
</feature>
<feature type="binding site" evidence="2 6 8">
    <location>
        <position position="61"/>
    </location>
    <ligand>
        <name>NAD(+)</name>
        <dbReference type="ChEBI" id="CHEBI:57540"/>
    </ligand>
</feature>
<feature type="binding site" evidence="2 6 7 8">
    <location>
        <position position="62"/>
    </location>
    <ligand>
        <name>NAD(+)</name>
        <dbReference type="ChEBI" id="CHEBI:57540"/>
    </ligand>
</feature>
<feature type="binding site" evidence="2 6 7 8">
    <location>
        <position position="88"/>
    </location>
    <ligand>
        <name>NAD(+)</name>
        <dbReference type="ChEBI" id="CHEBI:57540"/>
    </ligand>
</feature>
<feature type="binding site" evidence="2 6 7 8">
    <location>
        <position position="153"/>
    </location>
    <ligand>
        <name>NAD(+)</name>
        <dbReference type="ChEBI" id="CHEBI:57540"/>
    </ligand>
</feature>
<feature type="binding site" evidence="2 6 7 8">
    <location>
        <position position="157"/>
    </location>
    <ligand>
        <name>NAD(+)</name>
        <dbReference type="ChEBI" id="CHEBI:57540"/>
    </ligand>
</feature>
<feature type="binding site" evidence="2 6 7 8">
    <location>
        <position position="186"/>
    </location>
    <ligand>
        <name>NAD(+)</name>
        <dbReference type="ChEBI" id="CHEBI:57540"/>
    </ligand>
</feature>
<feature type="binding site" evidence="2 6 7 8">
    <location>
        <position position="188"/>
    </location>
    <ligand>
        <name>NAD(+)</name>
        <dbReference type="ChEBI" id="CHEBI:57540"/>
    </ligand>
</feature>
<feature type="binding site" evidence="2 6">
    <location>
        <position position="191"/>
    </location>
    <ligand>
        <name>NAD(+)</name>
        <dbReference type="ChEBI" id="CHEBI:57540"/>
    </ligand>
</feature>
<feature type="mutagenesis site" description="Maximal improvement in solubility; when associated with M-47 and K-69." evidence="2">
    <original>I</original>
    <variation>T</variation>
    <location>
        <position position="6"/>
    </location>
</feature>
<feature type="mutagenesis site" description="Maximal improvement in solubility; when associated with T-6 and K-69." evidence="2">
    <original>V</original>
    <variation>M</variation>
    <location>
        <position position="47"/>
    </location>
</feature>
<feature type="mutagenesis site" description="Maximal improvement in solubility; when associated with T-6 and M-47." evidence="2">
    <original>T</original>
    <variation>K</variation>
    <location>
        <position position="69"/>
    </location>
</feature>
<feature type="mutagenesis site" description="Complete loss of both oxidation of androsterone and reduction of progesterone; when associated with T-6; M-47 and K-69." evidence="2">
    <original>S</original>
    <variation>A</variation>
    <location>
        <position position="140"/>
    </location>
</feature>
<feature type="mutagenesis site" description="Complete loss of both oxidation of androsterone and reduction of progesterone; when associated with T-6; M-47 and K-69." evidence="2">
    <original>Y</original>
    <variation>F</variation>
    <location>
        <position position="153"/>
    </location>
</feature>
<feature type="turn" evidence="9">
    <location>
        <begin position="4"/>
        <end position="7"/>
    </location>
</feature>
<feature type="strand" evidence="9">
    <location>
        <begin position="9"/>
        <end position="13"/>
    </location>
</feature>
<feature type="turn" evidence="9">
    <location>
        <begin position="14"/>
        <end position="16"/>
    </location>
</feature>
<feature type="helix" evidence="9">
    <location>
        <begin position="18"/>
        <end position="29"/>
    </location>
</feature>
<feature type="strand" evidence="9">
    <location>
        <begin position="33"/>
        <end position="39"/>
    </location>
</feature>
<feature type="helix" evidence="9">
    <location>
        <begin position="41"/>
        <end position="50"/>
    </location>
</feature>
<feature type="helix" evidence="9">
    <location>
        <begin position="52"/>
        <end position="54"/>
    </location>
</feature>
<feature type="strand" evidence="9">
    <location>
        <begin position="55"/>
        <end position="59"/>
    </location>
</feature>
<feature type="helix" evidence="9">
    <location>
        <begin position="65"/>
        <end position="79"/>
    </location>
</feature>
<feature type="strand" evidence="9">
    <location>
        <begin position="84"/>
        <end position="87"/>
    </location>
</feature>
<feature type="turn" evidence="9">
    <location>
        <begin position="97"/>
        <end position="99"/>
    </location>
</feature>
<feature type="helix" evidence="9">
    <location>
        <begin position="102"/>
        <end position="112"/>
    </location>
</feature>
<feature type="helix" evidence="9">
    <location>
        <begin position="114"/>
        <end position="130"/>
    </location>
</feature>
<feature type="strand" evidence="9">
    <location>
        <begin position="133"/>
        <end position="138"/>
    </location>
</feature>
<feature type="helix" evidence="9">
    <location>
        <begin position="141"/>
        <end position="143"/>
    </location>
</feature>
<feature type="helix" evidence="9">
    <location>
        <begin position="151"/>
        <end position="171"/>
    </location>
</feature>
<feature type="helix" evidence="9">
    <location>
        <begin position="172"/>
        <end position="174"/>
    </location>
</feature>
<feature type="strand" evidence="9">
    <location>
        <begin position="176"/>
        <end position="183"/>
    </location>
</feature>
<feature type="helix" evidence="9">
    <location>
        <begin position="189"/>
        <end position="191"/>
    </location>
</feature>
<feature type="strand" evidence="9">
    <location>
        <begin position="202"/>
        <end position="205"/>
    </location>
</feature>
<feature type="helix" evidence="9">
    <location>
        <begin position="209"/>
        <end position="220"/>
    </location>
</feature>
<feature type="helix" evidence="9">
    <location>
        <begin position="222"/>
        <end position="224"/>
    </location>
</feature>
<feature type="strand" evidence="9">
    <location>
        <begin position="231"/>
        <end position="235"/>
    </location>
</feature>
<feature type="helix" evidence="9">
    <location>
        <begin position="238"/>
        <end position="240"/>
    </location>
</feature>
<name>HSD_MYCTU</name>
<accession>P9WGT1</accession>
<accession>L0TB81</accession>
<accession>P69167</accession>
<accession>Q10855</accession>